<feature type="chain" id="PRO_0000122007" description="Serine--tRNA ligase">
    <location>
        <begin position="1"/>
        <end position="425"/>
    </location>
</feature>
<feature type="binding site" evidence="1">
    <location>
        <begin position="231"/>
        <end position="233"/>
    </location>
    <ligand>
        <name>L-serine</name>
        <dbReference type="ChEBI" id="CHEBI:33384"/>
    </ligand>
</feature>
<feature type="binding site" evidence="1">
    <location>
        <begin position="262"/>
        <end position="264"/>
    </location>
    <ligand>
        <name>ATP</name>
        <dbReference type="ChEBI" id="CHEBI:30616"/>
    </ligand>
</feature>
<feature type="binding site" evidence="1">
    <location>
        <position position="285"/>
    </location>
    <ligand>
        <name>L-serine</name>
        <dbReference type="ChEBI" id="CHEBI:33384"/>
    </ligand>
</feature>
<feature type="binding site" evidence="1">
    <location>
        <begin position="349"/>
        <end position="352"/>
    </location>
    <ligand>
        <name>ATP</name>
        <dbReference type="ChEBI" id="CHEBI:30616"/>
    </ligand>
</feature>
<feature type="binding site" evidence="1">
    <location>
        <position position="385"/>
    </location>
    <ligand>
        <name>L-serine</name>
        <dbReference type="ChEBI" id="CHEBI:33384"/>
    </ligand>
</feature>
<evidence type="ECO:0000255" key="1">
    <source>
        <dbReference type="HAMAP-Rule" id="MF_00176"/>
    </source>
</evidence>
<organism>
    <name type="scientific">Bartonella quintana (strain Toulouse)</name>
    <name type="common">Rochalimaea quintana</name>
    <dbReference type="NCBI Taxonomy" id="283165"/>
    <lineage>
        <taxon>Bacteria</taxon>
        <taxon>Pseudomonadati</taxon>
        <taxon>Pseudomonadota</taxon>
        <taxon>Alphaproteobacteria</taxon>
        <taxon>Hyphomicrobiales</taxon>
        <taxon>Bartonellaceae</taxon>
        <taxon>Bartonella</taxon>
    </lineage>
</organism>
<protein>
    <recommendedName>
        <fullName evidence="1">Serine--tRNA ligase</fullName>
        <ecNumber evidence="1">6.1.1.11</ecNumber>
    </recommendedName>
    <alternativeName>
        <fullName evidence="1">Seryl-tRNA synthetase</fullName>
        <shortName evidence="1">SerRS</shortName>
    </alternativeName>
    <alternativeName>
        <fullName evidence="1">Seryl-tRNA(Ser/Sec) synthetase</fullName>
    </alternativeName>
</protein>
<dbReference type="EC" id="6.1.1.11" evidence="1"/>
<dbReference type="EMBL" id="BX897700">
    <property type="protein sequence ID" value="CAF25976.1"/>
    <property type="molecule type" value="Genomic_DNA"/>
</dbReference>
<dbReference type="RefSeq" id="WP_011179262.1">
    <property type="nucleotide sequence ID" value="NC_005955.1"/>
</dbReference>
<dbReference type="SMR" id="Q6G036"/>
<dbReference type="KEGG" id="bqu:BQ04770"/>
<dbReference type="eggNOG" id="COG0172">
    <property type="taxonomic scope" value="Bacteria"/>
</dbReference>
<dbReference type="HOGENOM" id="CLU_023797_1_1_5"/>
<dbReference type="OrthoDB" id="9804647at2"/>
<dbReference type="UniPathway" id="UPA00906">
    <property type="reaction ID" value="UER00895"/>
</dbReference>
<dbReference type="Proteomes" id="UP000000597">
    <property type="component" value="Chromosome"/>
</dbReference>
<dbReference type="GO" id="GO:0005737">
    <property type="term" value="C:cytoplasm"/>
    <property type="evidence" value="ECO:0007669"/>
    <property type="project" value="UniProtKB-SubCell"/>
</dbReference>
<dbReference type="GO" id="GO:0005524">
    <property type="term" value="F:ATP binding"/>
    <property type="evidence" value="ECO:0007669"/>
    <property type="project" value="UniProtKB-UniRule"/>
</dbReference>
<dbReference type="GO" id="GO:0004828">
    <property type="term" value="F:serine-tRNA ligase activity"/>
    <property type="evidence" value="ECO:0007669"/>
    <property type="project" value="UniProtKB-UniRule"/>
</dbReference>
<dbReference type="GO" id="GO:0016260">
    <property type="term" value="P:selenocysteine biosynthetic process"/>
    <property type="evidence" value="ECO:0007669"/>
    <property type="project" value="UniProtKB-UniRule"/>
</dbReference>
<dbReference type="GO" id="GO:0006434">
    <property type="term" value="P:seryl-tRNA aminoacylation"/>
    <property type="evidence" value="ECO:0007669"/>
    <property type="project" value="UniProtKB-UniRule"/>
</dbReference>
<dbReference type="CDD" id="cd00770">
    <property type="entry name" value="SerRS_core"/>
    <property type="match status" value="1"/>
</dbReference>
<dbReference type="Gene3D" id="3.30.930.10">
    <property type="entry name" value="Bira Bifunctional Protein, Domain 2"/>
    <property type="match status" value="1"/>
</dbReference>
<dbReference type="Gene3D" id="1.10.287.40">
    <property type="entry name" value="Serine-tRNA synthetase, tRNA binding domain"/>
    <property type="match status" value="1"/>
</dbReference>
<dbReference type="HAMAP" id="MF_00176">
    <property type="entry name" value="Ser_tRNA_synth_type1"/>
    <property type="match status" value="1"/>
</dbReference>
<dbReference type="InterPro" id="IPR002314">
    <property type="entry name" value="aa-tRNA-synt_IIb"/>
</dbReference>
<dbReference type="InterPro" id="IPR006195">
    <property type="entry name" value="aa-tRNA-synth_II"/>
</dbReference>
<dbReference type="InterPro" id="IPR045864">
    <property type="entry name" value="aa-tRNA-synth_II/BPL/LPL"/>
</dbReference>
<dbReference type="InterPro" id="IPR002317">
    <property type="entry name" value="Ser-tRNA-ligase_type_1"/>
</dbReference>
<dbReference type="InterPro" id="IPR015866">
    <property type="entry name" value="Ser-tRNA-synth_1_N"/>
</dbReference>
<dbReference type="InterPro" id="IPR042103">
    <property type="entry name" value="SerRS_1_N_sf"/>
</dbReference>
<dbReference type="InterPro" id="IPR033729">
    <property type="entry name" value="SerRS_core"/>
</dbReference>
<dbReference type="InterPro" id="IPR010978">
    <property type="entry name" value="tRNA-bd_arm"/>
</dbReference>
<dbReference type="NCBIfam" id="TIGR00414">
    <property type="entry name" value="serS"/>
    <property type="match status" value="1"/>
</dbReference>
<dbReference type="PANTHER" id="PTHR43697:SF1">
    <property type="entry name" value="SERINE--TRNA LIGASE"/>
    <property type="match status" value="1"/>
</dbReference>
<dbReference type="PANTHER" id="PTHR43697">
    <property type="entry name" value="SERYL-TRNA SYNTHETASE"/>
    <property type="match status" value="1"/>
</dbReference>
<dbReference type="Pfam" id="PF02403">
    <property type="entry name" value="Seryl_tRNA_N"/>
    <property type="match status" value="1"/>
</dbReference>
<dbReference type="Pfam" id="PF00587">
    <property type="entry name" value="tRNA-synt_2b"/>
    <property type="match status" value="1"/>
</dbReference>
<dbReference type="PIRSF" id="PIRSF001529">
    <property type="entry name" value="Ser-tRNA-synth_IIa"/>
    <property type="match status" value="1"/>
</dbReference>
<dbReference type="PRINTS" id="PR00981">
    <property type="entry name" value="TRNASYNTHSER"/>
</dbReference>
<dbReference type="SUPFAM" id="SSF55681">
    <property type="entry name" value="Class II aaRS and biotin synthetases"/>
    <property type="match status" value="1"/>
</dbReference>
<dbReference type="SUPFAM" id="SSF46589">
    <property type="entry name" value="tRNA-binding arm"/>
    <property type="match status" value="1"/>
</dbReference>
<dbReference type="PROSITE" id="PS50862">
    <property type="entry name" value="AA_TRNA_LIGASE_II"/>
    <property type="match status" value="1"/>
</dbReference>
<reference key="1">
    <citation type="journal article" date="2004" name="Proc. Natl. Acad. Sci. U.S.A.">
        <title>The louse-borne human pathogen Bartonella quintana is a genomic derivative of the zoonotic agent Bartonella henselae.</title>
        <authorList>
            <person name="Alsmark U.C.M."/>
            <person name="Frank A.C."/>
            <person name="Karlberg E.O."/>
            <person name="Legault B.-A."/>
            <person name="Ardell D.H."/>
            <person name="Canbaeck B."/>
            <person name="Eriksson A.-S."/>
            <person name="Naeslund A.K."/>
            <person name="Handley S.A."/>
            <person name="Huvet M."/>
            <person name="La Scola B."/>
            <person name="Holmberg M."/>
            <person name="Andersson S.G.E."/>
        </authorList>
    </citation>
    <scope>NUCLEOTIDE SEQUENCE [LARGE SCALE GENOMIC DNA]</scope>
    <source>
        <strain>Toulouse</strain>
    </source>
</reference>
<name>SYS_BARQU</name>
<comment type="function">
    <text evidence="1">Catalyzes the attachment of serine to tRNA(Ser). Is also able to aminoacylate tRNA(Sec) with serine, to form the misacylated tRNA L-seryl-tRNA(Sec), which will be further converted into selenocysteinyl-tRNA(Sec).</text>
</comment>
<comment type="catalytic activity">
    <reaction evidence="1">
        <text>tRNA(Ser) + L-serine + ATP = L-seryl-tRNA(Ser) + AMP + diphosphate + H(+)</text>
        <dbReference type="Rhea" id="RHEA:12292"/>
        <dbReference type="Rhea" id="RHEA-COMP:9669"/>
        <dbReference type="Rhea" id="RHEA-COMP:9703"/>
        <dbReference type="ChEBI" id="CHEBI:15378"/>
        <dbReference type="ChEBI" id="CHEBI:30616"/>
        <dbReference type="ChEBI" id="CHEBI:33019"/>
        <dbReference type="ChEBI" id="CHEBI:33384"/>
        <dbReference type="ChEBI" id="CHEBI:78442"/>
        <dbReference type="ChEBI" id="CHEBI:78533"/>
        <dbReference type="ChEBI" id="CHEBI:456215"/>
        <dbReference type="EC" id="6.1.1.11"/>
    </reaction>
</comment>
<comment type="catalytic activity">
    <reaction evidence="1">
        <text>tRNA(Sec) + L-serine + ATP = L-seryl-tRNA(Sec) + AMP + diphosphate + H(+)</text>
        <dbReference type="Rhea" id="RHEA:42580"/>
        <dbReference type="Rhea" id="RHEA-COMP:9742"/>
        <dbReference type="Rhea" id="RHEA-COMP:10128"/>
        <dbReference type="ChEBI" id="CHEBI:15378"/>
        <dbReference type="ChEBI" id="CHEBI:30616"/>
        <dbReference type="ChEBI" id="CHEBI:33019"/>
        <dbReference type="ChEBI" id="CHEBI:33384"/>
        <dbReference type="ChEBI" id="CHEBI:78442"/>
        <dbReference type="ChEBI" id="CHEBI:78533"/>
        <dbReference type="ChEBI" id="CHEBI:456215"/>
        <dbReference type="EC" id="6.1.1.11"/>
    </reaction>
</comment>
<comment type="pathway">
    <text evidence="1">Aminoacyl-tRNA biosynthesis; selenocysteinyl-tRNA(Sec) biosynthesis; L-seryl-tRNA(Sec) from L-serine and tRNA(Sec): step 1/1.</text>
</comment>
<comment type="subunit">
    <text evidence="1">Homodimer. The tRNA molecule binds across the dimer.</text>
</comment>
<comment type="subcellular location">
    <subcellularLocation>
        <location evidence="1">Cytoplasm</location>
    </subcellularLocation>
</comment>
<comment type="domain">
    <text evidence="1">Consists of two distinct domains, a catalytic core and a N-terminal extension that is involved in tRNA binding.</text>
</comment>
<comment type="similarity">
    <text evidence="1">Belongs to the class-II aminoacyl-tRNA synthetase family. Type-1 seryl-tRNA synthetase subfamily.</text>
</comment>
<sequence length="425" mass="47842">MLDIKWIREYPEKLDEALAKRGIEPQAERLIKLDLERRSHVAKVQSAQERRNAASKEIGQALAACDQTMAEHLRAEVEEIKVFLSSATTEEKRLTENFERALSTLPNIPLDDVSVGKDGSDNVVIRHFGTPAMFDFTPKEHFDLGQNLKQMDFERASRLSGTRFTVLSGALARLERALGQFMLDVHVDEHGYTEVSVPLLVRDEIVYGAAQLPKFADDLFRTTDGRWLISTAEVPLTNLVNNEILEISDLPLRFSSLTPCFRSEAGSAGRDTRGMLRQHQFWKVEMVSITTEEQSLMELERMTECAEDVLKRLGLPFRTVVLSTGDMGFAARKTYDIEVWLPGQGCYREISSCSVCGDFQGRRMNARYRKEGDKTLKFVHSLNGSGTAVGRCLIAILENYQQADGSIIIPDVLQPYVKGMRCITA</sequence>
<keyword id="KW-0030">Aminoacyl-tRNA synthetase</keyword>
<keyword id="KW-0067">ATP-binding</keyword>
<keyword id="KW-0963">Cytoplasm</keyword>
<keyword id="KW-0436">Ligase</keyword>
<keyword id="KW-0547">Nucleotide-binding</keyword>
<keyword id="KW-0648">Protein biosynthesis</keyword>
<accession>Q6G036</accession>
<gene>
    <name evidence="1" type="primary">serS</name>
    <name type="ordered locus">BQ04770</name>
</gene>
<proteinExistence type="inferred from homology"/>